<name>PSTB2_PSEPK</name>
<gene>
    <name evidence="1" type="primary">pstB2</name>
    <name type="ordered locus">PP_5326</name>
</gene>
<comment type="function">
    <text evidence="1">Part of the ABC transporter complex PstSACB involved in phosphate import. Responsible for energy coupling to the transport system.</text>
</comment>
<comment type="catalytic activity">
    <reaction evidence="1">
        <text>phosphate(out) + ATP + H2O = ADP + 2 phosphate(in) + H(+)</text>
        <dbReference type="Rhea" id="RHEA:24440"/>
        <dbReference type="ChEBI" id="CHEBI:15377"/>
        <dbReference type="ChEBI" id="CHEBI:15378"/>
        <dbReference type="ChEBI" id="CHEBI:30616"/>
        <dbReference type="ChEBI" id="CHEBI:43474"/>
        <dbReference type="ChEBI" id="CHEBI:456216"/>
        <dbReference type="EC" id="7.3.2.1"/>
    </reaction>
</comment>
<comment type="subunit">
    <text evidence="1">The complex is composed of two ATP-binding proteins (PstB), two transmembrane proteins (PstC and PstA) and a solute-binding protein (PstS).</text>
</comment>
<comment type="subcellular location">
    <subcellularLocation>
        <location evidence="1">Cell inner membrane</location>
        <topology evidence="1">Peripheral membrane protein</topology>
    </subcellularLocation>
</comment>
<comment type="similarity">
    <text evidence="1">Belongs to the ABC transporter superfamily. Phosphate importer (TC 3.A.1.7) family.</text>
</comment>
<comment type="sequence caution" evidence="2">
    <conflict type="erroneous initiation">
        <sequence resource="EMBL-CDS" id="AAN70891"/>
    </conflict>
</comment>
<keyword id="KW-0067">ATP-binding</keyword>
<keyword id="KW-0997">Cell inner membrane</keyword>
<keyword id="KW-1003">Cell membrane</keyword>
<keyword id="KW-0472">Membrane</keyword>
<keyword id="KW-0547">Nucleotide-binding</keyword>
<keyword id="KW-0592">Phosphate transport</keyword>
<keyword id="KW-1185">Reference proteome</keyword>
<keyword id="KW-1278">Translocase</keyword>
<keyword id="KW-0813">Transport</keyword>
<organism>
    <name type="scientific">Pseudomonas putida (strain ATCC 47054 / DSM 6125 / CFBP 8728 / NCIMB 11950 / KT2440)</name>
    <dbReference type="NCBI Taxonomy" id="160488"/>
    <lineage>
        <taxon>Bacteria</taxon>
        <taxon>Pseudomonadati</taxon>
        <taxon>Pseudomonadota</taxon>
        <taxon>Gammaproteobacteria</taxon>
        <taxon>Pseudomonadales</taxon>
        <taxon>Pseudomonadaceae</taxon>
        <taxon>Pseudomonas</taxon>
    </lineage>
</organism>
<protein>
    <recommendedName>
        <fullName evidence="1">Phosphate import ATP-binding protein PstB 2</fullName>
        <ecNumber evidence="1">7.3.2.1</ecNumber>
    </recommendedName>
    <alternativeName>
        <fullName evidence="1">ABC phosphate transporter 2</fullName>
    </alternativeName>
    <alternativeName>
        <fullName evidence="1">Phosphate-transporting ATPase 2</fullName>
    </alternativeName>
</protein>
<sequence>MQQDSHTHGIDMSALGRNKQSLRMAEETVAIEVPGLSLFYGDKQALFDVQMNIPKQRVTAFIGPSGCGKSTLLRTFNRMNDLVDGCRVEGAINLYGNNIYRKGEDVAELRRRVGMVFQKPNPFPKTIYENVVYGLRIQGINKKRVLDEAVEWALKGAALWDEVKDRLHESALGLSGGQQQRLVIARTIAVEPEVLLLDEPCSALDPISTLKVEELIYELKSKYTIVIVTHNMQQAARVSDYTAFMYMGKLVEFGDTDTLFTNPAKKQTEDYITGRYG</sequence>
<feature type="chain" id="PRO_0000092863" description="Phosphate import ATP-binding protein PstB 2">
    <location>
        <begin position="1"/>
        <end position="277"/>
    </location>
</feature>
<feature type="domain" description="ABC transporter" evidence="1">
    <location>
        <begin position="31"/>
        <end position="272"/>
    </location>
</feature>
<feature type="binding site" evidence="1">
    <location>
        <begin position="63"/>
        <end position="70"/>
    </location>
    <ligand>
        <name>ATP</name>
        <dbReference type="ChEBI" id="CHEBI:30616"/>
    </ligand>
</feature>
<proteinExistence type="inferred from homology"/>
<evidence type="ECO:0000255" key="1">
    <source>
        <dbReference type="HAMAP-Rule" id="MF_01702"/>
    </source>
</evidence>
<evidence type="ECO:0000305" key="2"/>
<dbReference type="EC" id="7.3.2.1" evidence="1"/>
<dbReference type="EMBL" id="AE015451">
    <property type="protein sequence ID" value="AAN70891.1"/>
    <property type="status" value="ALT_INIT"/>
    <property type="molecule type" value="Genomic_DNA"/>
</dbReference>
<dbReference type="RefSeq" id="NP_747427.1">
    <property type="nucleotide sequence ID" value="NC_002947.4"/>
</dbReference>
<dbReference type="SMR" id="Q88C57"/>
<dbReference type="STRING" id="160488.PP_5326"/>
<dbReference type="PaxDb" id="160488-PP_5326"/>
<dbReference type="KEGG" id="ppu:PP_5326"/>
<dbReference type="PATRIC" id="fig|160488.4.peg.5678"/>
<dbReference type="eggNOG" id="COG1117">
    <property type="taxonomic scope" value="Bacteria"/>
</dbReference>
<dbReference type="HOGENOM" id="CLU_000604_1_22_6"/>
<dbReference type="OrthoDB" id="9802264at2"/>
<dbReference type="PhylomeDB" id="Q88C57"/>
<dbReference type="Proteomes" id="UP000000556">
    <property type="component" value="Chromosome"/>
</dbReference>
<dbReference type="GO" id="GO:0005886">
    <property type="term" value="C:plasma membrane"/>
    <property type="evidence" value="ECO:0007669"/>
    <property type="project" value="UniProtKB-SubCell"/>
</dbReference>
<dbReference type="GO" id="GO:0005524">
    <property type="term" value="F:ATP binding"/>
    <property type="evidence" value="ECO:0007669"/>
    <property type="project" value="UniProtKB-KW"/>
</dbReference>
<dbReference type="GO" id="GO:0016887">
    <property type="term" value="F:ATP hydrolysis activity"/>
    <property type="evidence" value="ECO:0007669"/>
    <property type="project" value="InterPro"/>
</dbReference>
<dbReference type="GO" id="GO:0015415">
    <property type="term" value="F:ATPase-coupled phosphate ion transmembrane transporter activity"/>
    <property type="evidence" value="ECO:0007669"/>
    <property type="project" value="UniProtKB-EC"/>
</dbReference>
<dbReference type="GO" id="GO:0035435">
    <property type="term" value="P:phosphate ion transmembrane transport"/>
    <property type="evidence" value="ECO:0007669"/>
    <property type="project" value="InterPro"/>
</dbReference>
<dbReference type="CDD" id="cd03260">
    <property type="entry name" value="ABC_PstB_phosphate_transporter"/>
    <property type="match status" value="1"/>
</dbReference>
<dbReference type="FunFam" id="3.40.50.300:FF:000132">
    <property type="entry name" value="Phosphate import ATP-binding protein PstB"/>
    <property type="match status" value="1"/>
</dbReference>
<dbReference type="Gene3D" id="3.40.50.300">
    <property type="entry name" value="P-loop containing nucleotide triphosphate hydrolases"/>
    <property type="match status" value="1"/>
</dbReference>
<dbReference type="InterPro" id="IPR003593">
    <property type="entry name" value="AAA+_ATPase"/>
</dbReference>
<dbReference type="InterPro" id="IPR003439">
    <property type="entry name" value="ABC_transporter-like_ATP-bd"/>
</dbReference>
<dbReference type="InterPro" id="IPR017871">
    <property type="entry name" value="ABC_transporter-like_CS"/>
</dbReference>
<dbReference type="InterPro" id="IPR027417">
    <property type="entry name" value="P-loop_NTPase"/>
</dbReference>
<dbReference type="InterPro" id="IPR005670">
    <property type="entry name" value="PstB-like"/>
</dbReference>
<dbReference type="NCBIfam" id="TIGR00972">
    <property type="entry name" value="3a0107s01c2"/>
    <property type="match status" value="1"/>
</dbReference>
<dbReference type="PANTHER" id="PTHR43423">
    <property type="entry name" value="ABC TRANSPORTER I FAMILY MEMBER 17"/>
    <property type="match status" value="1"/>
</dbReference>
<dbReference type="PANTHER" id="PTHR43423:SF12">
    <property type="entry name" value="IRON EXPORT ATP-BINDING PROTEIN FETA-RELATED"/>
    <property type="match status" value="1"/>
</dbReference>
<dbReference type="Pfam" id="PF00005">
    <property type="entry name" value="ABC_tran"/>
    <property type="match status" value="1"/>
</dbReference>
<dbReference type="SMART" id="SM00382">
    <property type="entry name" value="AAA"/>
    <property type="match status" value="1"/>
</dbReference>
<dbReference type="SUPFAM" id="SSF52540">
    <property type="entry name" value="P-loop containing nucleoside triphosphate hydrolases"/>
    <property type="match status" value="1"/>
</dbReference>
<dbReference type="PROSITE" id="PS00211">
    <property type="entry name" value="ABC_TRANSPORTER_1"/>
    <property type="match status" value="1"/>
</dbReference>
<dbReference type="PROSITE" id="PS50893">
    <property type="entry name" value="ABC_TRANSPORTER_2"/>
    <property type="match status" value="1"/>
</dbReference>
<dbReference type="PROSITE" id="PS51238">
    <property type="entry name" value="PSTB"/>
    <property type="match status" value="1"/>
</dbReference>
<accession>Q88C57</accession>
<reference key="1">
    <citation type="journal article" date="2002" name="Environ. Microbiol.">
        <title>Complete genome sequence and comparative analysis of the metabolically versatile Pseudomonas putida KT2440.</title>
        <authorList>
            <person name="Nelson K.E."/>
            <person name="Weinel C."/>
            <person name="Paulsen I.T."/>
            <person name="Dodson R.J."/>
            <person name="Hilbert H."/>
            <person name="Martins dos Santos V.A.P."/>
            <person name="Fouts D.E."/>
            <person name="Gill S.R."/>
            <person name="Pop M."/>
            <person name="Holmes M."/>
            <person name="Brinkac L.M."/>
            <person name="Beanan M.J."/>
            <person name="DeBoy R.T."/>
            <person name="Daugherty S.C."/>
            <person name="Kolonay J.F."/>
            <person name="Madupu R."/>
            <person name="Nelson W.C."/>
            <person name="White O."/>
            <person name="Peterson J.D."/>
            <person name="Khouri H.M."/>
            <person name="Hance I."/>
            <person name="Chris Lee P."/>
            <person name="Holtzapple E.K."/>
            <person name="Scanlan D."/>
            <person name="Tran K."/>
            <person name="Moazzez A."/>
            <person name="Utterback T.R."/>
            <person name="Rizzo M."/>
            <person name="Lee K."/>
            <person name="Kosack D."/>
            <person name="Moestl D."/>
            <person name="Wedler H."/>
            <person name="Lauber J."/>
            <person name="Stjepandic D."/>
            <person name="Hoheisel J."/>
            <person name="Straetz M."/>
            <person name="Heim S."/>
            <person name="Kiewitz C."/>
            <person name="Eisen J.A."/>
            <person name="Timmis K.N."/>
            <person name="Duesterhoeft A."/>
            <person name="Tuemmler B."/>
            <person name="Fraser C.M."/>
        </authorList>
    </citation>
    <scope>NUCLEOTIDE SEQUENCE [LARGE SCALE GENOMIC DNA]</scope>
    <source>
        <strain>ATCC 47054 / DSM 6125 / CFBP 8728 / NCIMB 11950 / KT2440</strain>
    </source>
</reference>